<protein>
    <recommendedName>
        <fullName>Calcium/calmodulin-dependent protein kinase type 1D</fullName>
        <ecNumber>2.7.11.17</ecNumber>
    </recommendedName>
    <alternativeName>
        <fullName>CaM kinase I delta</fullName>
        <shortName>CaM-KI delta</shortName>
        <shortName>CaMKI delta</shortName>
    </alternativeName>
    <alternativeName>
        <fullName>CaM kinase ID</fullName>
    </alternativeName>
    <alternativeName>
        <fullName>CaMKI-like protein kinase</fullName>
        <shortName>CKLiK</shortName>
        <shortName>mCKLiK</shortName>
    </alternativeName>
</protein>
<gene>
    <name type="primary">Camk1d</name>
</gene>
<dbReference type="EC" id="2.7.11.17"/>
<dbReference type="EMBL" id="AY273822">
    <property type="protein sequence ID" value="AAP31673.1"/>
    <property type="molecule type" value="mRNA"/>
</dbReference>
<dbReference type="EMBL" id="AK052401">
    <property type="protein sequence ID" value="BAC34975.1"/>
    <property type="molecule type" value="mRNA"/>
</dbReference>
<dbReference type="EMBL" id="AK053173">
    <property type="protein sequence ID" value="BAC35295.1"/>
    <property type="molecule type" value="mRNA"/>
</dbReference>
<dbReference type="EMBL" id="AK147616">
    <property type="protein sequence ID" value="BAE28027.1"/>
    <property type="molecule type" value="mRNA"/>
</dbReference>
<dbReference type="EMBL" id="AK154434">
    <property type="protein sequence ID" value="BAE32584.1"/>
    <property type="molecule type" value="mRNA"/>
</dbReference>
<dbReference type="EMBL" id="AK170777">
    <property type="protein sequence ID" value="BAE42022.1"/>
    <property type="molecule type" value="mRNA"/>
</dbReference>
<dbReference type="CCDS" id="CCDS15665.1">
    <molecule id="Q8BW96-1"/>
</dbReference>
<dbReference type="CCDS" id="CCDS70975.1">
    <molecule id="Q8BW96-3"/>
</dbReference>
<dbReference type="RefSeq" id="NP_001277303.1">
    <property type="nucleotide sequence ID" value="NM_001290374.1"/>
</dbReference>
<dbReference type="RefSeq" id="NP_001277304.1">
    <property type="nucleotide sequence ID" value="NM_001290375.1"/>
</dbReference>
<dbReference type="RefSeq" id="NP_001277305.1">
    <molecule id="Q8BW96-3"/>
    <property type="nucleotide sequence ID" value="NM_001290376.1"/>
</dbReference>
<dbReference type="RefSeq" id="NP_796317.2">
    <molecule id="Q8BW96-1"/>
    <property type="nucleotide sequence ID" value="NM_177343.4"/>
</dbReference>
<dbReference type="SMR" id="Q8BW96"/>
<dbReference type="BioGRID" id="230634">
    <property type="interactions" value="8"/>
</dbReference>
<dbReference type="FunCoup" id="Q8BW96">
    <property type="interactions" value="1762"/>
</dbReference>
<dbReference type="IntAct" id="Q8BW96">
    <property type="interactions" value="1"/>
</dbReference>
<dbReference type="STRING" id="10090.ENSMUSP00000037028"/>
<dbReference type="GlyGen" id="Q8BW96">
    <property type="glycosylation" value="3 sites, 1 N-linked glycan (1 site), 1 O-linked glycan (2 sites)"/>
</dbReference>
<dbReference type="iPTMnet" id="Q8BW96"/>
<dbReference type="PhosphoSitePlus" id="Q8BW96"/>
<dbReference type="jPOST" id="Q8BW96"/>
<dbReference type="PaxDb" id="10090-ENSMUSP00000037028"/>
<dbReference type="PeptideAtlas" id="Q8BW96"/>
<dbReference type="ProteomicsDB" id="263579">
    <molecule id="Q8BW96-1"/>
</dbReference>
<dbReference type="ProteomicsDB" id="263580">
    <molecule id="Q8BW96-2"/>
</dbReference>
<dbReference type="ProteomicsDB" id="263581">
    <molecule id="Q8BW96-3"/>
</dbReference>
<dbReference type="Pumba" id="Q8BW96"/>
<dbReference type="Antibodypedia" id="1550">
    <property type="antibodies" value="435 antibodies from 36 providers"/>
</dbReference>
<dbReference type="DNASU" id="227541"/>
<dbReference type="Ensembl" id="ENSMUST00000044009.14">
    <molecule id="Q8BW96-1"/>
    <property type="protein sequence ID" value="ENSMUSP00000037028.8"/>
    <property type="gene ID" value="ENSMUSG00000039145.17"/>
</dbReference>
<dbReference type="Ensembl" id="ENSMUST00000114987.4">
    <molecule id="Q8BW96-3"/>
    <property type="protein sequence ID" value="ENSMUSP00000110638.4"/>
    <property type="gene ID" value="ENSMUSG00000039145.17"/>
</dbReference>
<dbReference type="GeneID" id="227541"/>
<dbReference type="KEGG" id="mmu:227541"/>
<dbReference type="UCSC" id="uc008ifp.2">
    <molecule id="Q8BW96-1"/>
    <property type="organism name" value="mouse"/>
</dbReference>
<dbReference type="UCSC" id="uc056zje.1">
    <molecule id="Q8BW96-3"/>
    <property type="organism name" value="mouse"/>
</dbReference>
<dbReference type="AGR" id="MGI:2442190"/>
<dbReference type="CTD" id="57118"/>
<dbReference type="MGI" id="MGI:2442190">
    <property type="gene designation" value="Camk1d"/>
</dbReference>
<dbReference type="VEuPathDB" id="HostDB:ENSMUSG00000039145"/>
<dbReference type="eggNOG" id="KOG0032">
    <property type="taxonomic scope" value="Eukaryota"/>
</dbReference>
<dbReference type="GeneTree" id="ENSGT00940000156776"/>
<dbReference type="HOGENOM" id="CLU_000288_63_0_1"/>
<dbReference type="InParanoid" id="Q8BW96"/>
<dbReference type="OMA" id="RPKVQPC"/>
<dbReference type="OrthoDB" id="40902at2759"/>
<dbReference type="PhylomeDB" id="Q8BW96"/>
<dbReference type="TreeFam" id="TF314166"/>
<dbReference type="BioGRID-ORCS" id="227541">
    <property type="hits" value="0 hits in 82 CRISPR screens"/>
</dbReference>
<dbReference type="ChiTaRS" id="Camk1d">
    <property type="organism name" value="mouse"/>
</dbReference>
<dbReference type="PRO" id="PR:Q8BW96"/>
<dbReference type="Proteomes" id="UP000000589">
    <property type="component" value="Chromosome 2"/>
</dbReference>
<dbReference type="RNAct" id="Q8BW96">
    <property type="molecule type" value="protein"/>
</dbReference>
<dbReference type="Bgee" id="ENSMUSG00000039145">
    <property type="expression patterns" value="Expressed in olfactory tubercle and 203 other cell types or tissues"/>
</dbReference>
<dbReference type="ExpressionAtlas" id="Q8BW96">
    <property type="expression patterns" value="baseline and differential"/>
</dbReference>
<dbReference type="GO" id="GO:0005737">
    <property type="term" value="C:cytoplasm"/>
    <property type="evidence" value="ECO:0000250"/>
    <property type="project" value="UniProtKB"/>
</dbReference>
<dbReference type="GO" id="GO:0005634">
    <property type="term" value="C:nucleus"/>
    <property type="evidence" value="ECO:0000250"/>
    <property type="project" value="UniProtKB"/>
</dbReference>
<dbReference type="GO" id="GO:0005524">
    <property type="term" value="F:ATP binding"/>
    <property type="evidence" value="ECO:0007669"/>
    <property type="project" value="UniProtKB-KW"/>
</dbReference>
<dbReference type="GO" id="GO:0004683">
    <property type="term" value="F:calcium/calmodulin-dependent protein kinase activity"/>
    <property type="evidence" value="ECO:0000266"/>
    <property type="project" value="MGI"/>
</dbReference>
<dbReference type="GO" id="GO:0005516">
    <property type="term" value="F:calmodulin binding"/>
    <property type="evidence" value="ECO:0007669"/>
    <property type="project" value="UniProtKB-KW"/>
</dbReference>
<dbReference type="GO" id="GO:0106310">
    <property type="term" value="F:protein serine kinase activity"/>
    <property type="evidence" value="ECO:0007669"/>
    <property type="project" value="RHEA"/>
</dbReference>
<dbReference type="GO" id="GO:0006954">
    <property type="term" value="P:inflammatory response"/>
    <property type="evidence" value="ECO:0007669"/>
    <property type="project" value="UniProtKB-KW"/>
</dbReference>
<dbReference type="GO" id="GO:0043066">
    <property type="term" value="P:negative regulation of apoptotic process"/>
    <property type="evidence" value="ECO:0000314"/>
    <property type="project" value="MGI"/>
</dbReference>
<dbReference type="GO" id="GO:0007399">
    <property type="term" value="P:nervous system development"/>
    <property type="evidence" value="ECO:0007669"/>
    <property type="project" value="UniProtKB-KW"/>
</dbReference>
<dbReference type="GO" id="GO:0043065">
    <property type="term" value="P:positive regulation of apoptotic process"/>
    <property type="evidence" value="ECO:0000314"/>
    <property type="project" value="MGI"/>
</dbReference>
<dbReference type="GO" id="GO:0032793">
    <property type="term" value="P:positive regulation of CREB transcription factor activity"/>
    <property type="evidence" value="ECO:0000250"/>
    <property type="project" value="UniProtKB"/>
</dbReference>
<dbReference type="GO" id="GO:0010976">
    <property type="term" value="P:positive regulation of neuron projection development"/>
    <property type="evidence" value="ECO:0000315"/>
    <property type="project" value="UniProtKB"/>
</dbReference>
<dbReference type="GO" id="GO:0090023">
    <property type="term" value="P:positive regulation of neutrophil chemotaxis"/>
    <property type="evidence" value="ECO:0000315"/>
    <property type="project" value="UniProtKB"/>
</dbReference>
<dbReference type="GO" id="GO:0050766">
    <property type="term" value="P:positive regulation of phagocytosis"/>
    <property type="evidence" value="ECO:0000250"/>
    <property type="project" value="UniProtKB"/>
</dbReference>
<dbReference type="GO" id="GO:0060267">
    <property type="term" value="P:positive regulation of respiratory burst"/>
    <property type="evidence" value="ECO:0000250"/>
    <property type="project" value="UniProtKB"/>
</dbReference>
<dbReference type="GO" id="GO:0050773">
    <property type="term" value="P:regulation of dendrite development"/>
    <property type="evidence" value="ECO:0000250"/>
    <property type="project" value="UniProtKB"/>
</dbReference>
<dbReference type="GO" id="GO:0071622">
    <property type="term" value="P:regulation of granulocyte chemotaxis"/>
    <property type="evidence" value="ECO:0000250"/>
    <property type="project" value="UniProtKB"/>
</dbReference>
<dbReference type="CDD" id="cd14168">
    <property type="entry name" value="STKc_CaMKI_delta"/>
    <property type="match status" value="1"/>
</dbReference>
<dbReference type="FunFam" id="1.10.510.10:FF:000026">
    <property type="entry name" value="Calcium/calmodulin-dependent protein kinase type 1"/>
    <property type="match status" value="1"/>
</dbReference>
<dbReference type="FunFam" id="3.30.200.20:FF:000203">
    <property type="entry name" value="Calcium/calmodulin-dependent protein kinase type 1"/>
    <property type="match status" value="1"/>
</dbReference>
<dbReference type="Gene3D" id="3.30.200.20">
    <property type="entry name" value="Phosphorylase Kinase, domain 1"/>
    <property type="match status" value="1"/>
</dbReference>
<dbReference type="Gene3D" id="1.10.510.10">
    <property type="entry name" value="Transferase(Phosphotransferase) domain 1"/>
    <property type="match status" value="1"/>
</dbReference>
<dbReference type="InterPro" id="IPR011009">
    <property type="entry name" value="Kinase-like_dom_sf"/>
</dbReference>
<dbReference type="InterPro" id="IPR000719">
    <property type="entry name" value="Prot_kinase_dom"/>
</dbReference>
<dbReference type="InterPro" id="IPR017441">
    <property type="entry name" value="Protein_kinase_ATP_BS"/>
</dbReference>
<dbReference type="InterPro" id="IPR008271">
    <property type="entry name" value="Ser/Thr_kinase_AS"/>
</dbReference>
<dbReference type="PANTHER" id="PTHR24347">
    <property type="entry name" value="SERINE/THREONINE-PROTEIN KINASE"/>
    <property type="match status" value="1"/>
</dbReference>
<dbReference type="Pfam" id="PF00069">
    <property type="entry name" value="Pkinase"/>
    <property type="match status" value="1"/>
</dbReference>
<dbReference type="SMART" id="SM00220">
    <property type="entry name" value="S_TKc"/>
    <property type="match status" value="1"/>
</dbReference>
<dbReference type="SUPFAM" id="SSF56112">
    <property type="entry name" value="Protein kinase-like (PK-like)"/>
    <property type="match status" value="1"/>
</dbReference>
<dbReference type="PROSITE" id="PS00107">
    <property type="entry name" value="PROTEIN_KINASE_ATP"/>
    <property type="match status" value="1"/>
</dbReference>
<dbReference type="PROSITE" id="PS50011">
    <property type="entry name" value="PROTEIN_KINASE_DOM"/>
    <property type="match status" value="1"/>
</dbReference>
<dbReference type="PROSITE" id="PS00108">
    <property type="entry name" value="PROTEIN_KINASE_ST"/>
    <property type="match status" value="1"/>
</dbReference>
<comment type="function">
    <text evidence="1 7 8">Calcium/calmodulin-dependent protein kinase that operates in the calcium-triggered CaMKK-CaMK1 signaling cascade and, upon calcium influx, activates CREB-dependent gene transcription, regulates calcium-mediated granulocyte function and respiratory burst and promotes basal dendritic growth of hippocampal neurons. In neutrophil cells, required for cytokine-induced proliferative responses and activation of the respiratory burst. Activates the transcription factor CREB1 in hippocampal neuron nuclei. May play a role in apoptosis of erythroleukemia cells. In vitro, phosphorylates transcription factor CREM isoform Beta (By similarity). Isoform 1 but not isoform 2 activates CREB1.</text>
</comment>
<comment type="catalytic activity">
    <reaction>
        <text>L-seryl-[protein] + ATP = O-phospho-L-seryl-[protein] + ADP + H(+)</text>
        <dbReference type="Rhea" id="RHEA:17989"/>
        <dbReference type="Rhea" id="RHEA-COMP:9863"/>
        <dbReference type="Rhea" id="RHEA-COMP:11604"/>
        <dbReference type="ChEBI" id="CHEBI:15378"/>
        <dbReference type="ChEBI" id="CHEBI:29999"/>
        <dbReference type="ChEBI" id="CHEBI:30616"/>
        <dbReference type="ChEBI" id="CHEBI:83421"/>
        <dbReference type="ChEBI" id="CHEBI:456216"/>
        <dbReference type="EC" id="2.7.11.17"/>
    </reaction>
</comment>
<comment type="catalytic activity">
    <reaction>
        <text>L-threonyl-[protein] + ATP = O-phospho-L-threonyl-[protein] + ADP + H(+)</text>
        <dbReference type="Rhea" id="RHEA:46608"/>
        <dbReference type="Rhea" id="RHEA-COMP:11060"/>
        <dbReference type="Rhea" id="RHEA-COMP:11605"/>
        <dbReference type="ChEBI" id="CHEBI:15378"/>
        <dbReference type="ChEBI" id="CHEBI:30013"/>
        <dbReference type="ChEBI" id="CHEBI:30616"/>
        <dbReference type="ChEBI" id="CHEBI:61977"/>
        <dbReference type="ChEBI" id="CHEBI:456216"/>
        <dbReference type="EC" id="2.7.11.17"/>
    </reaction>
</comment>
<comment type="activity regulation">
    <text evidence="1">Activated by Ca(2+)/calmodulin. Binding of calmodulin results in conformational change that relieves intrasteric autoinhibition and allows phosphorylation of Thr-180 within the activation loop by CaMKK1 or CaMKK2. Phosphorylation of Thr-180 results in several fold increase in total activity. Unlike CaMK4, may be unable to exhibit autonomous activity after Ca(2+)/calmodulin activation (By similarity).</text>
</comment>
<comment type="subcellular location">
    <subcellularLocation>
        <location evidence="1">Cytoplasm</location>
    </subcellularLocation>
    <subcellularLocation>
        <location evidence="1">Nucleus</location>
    </subcellularLocation>
    <text evidence="1">Predominantly cytoplasmic. Nuclear upon activation.</text>
</comment>
<comment type="alternative products">
    <event type="alternative splicing"/>
    <isoform>
        <id>Q8BW96-1</id>
        <name>1</name>
        <name>Alpha</name>
        <sequence type="displayed"/>
    </isoform>
    <isoform>
        <id>Q8BW96-2</id>
        <name>2</name>
        <name>Beta</name>
        <sequence type="described" ref="VSP_012137"/>
    </isoform>
    <isoform>
        <id>Q8BW96-3</id>
        <name>3</name>
        <sequence type="described" ref="VSP_012136"/>
    </isoform>
</comment>
<comment type="tissue specificity">
    <text evidence="7">Expressed ubiquitously with high levels in brain and low levels in kidney. Isoform 2 is highly expressed in brain compared to other tissues. In hematopoietic cell lines predominant expression was detected in T and EC cells.</text>
</comment>
<comment type="developmental stage">
    <text evidence="8">In EML cell line differentiation, expression increases 4 to 8 hours after treatment with all-trans retinoic acid (ATRA) and then declines after 24 hours of ATRA induction.</text>
</comment>
<comment type="induction">
    <text evidence="6">Down-regulated upon cholesterol-rich diet.</text>
</comment>
<comment type="domain">
    <text evidence="1">The autoinhibitory domain overlaps with the calmodulin binding region and interacts in the inactive folded state with the catalytic domain as a pseudosubstrate.</text>
</comment>
<comment type="miscellaneous">
    <molecule>Isoform 2</molecule>
    <text evidence="11">Inactive. Does not activate CREB1.</text>
</comment>
<comment type="similarity">
    <text evidence="11">Belongs to the protein kinase superfamily. CAMK Ser/Thr protein kinase family. CaMK subfamily.</text>
</comment>
<accession>Q8BW96</accession>
<accession>Q3U450</accession>
<accession>Q80W64</accession>
<accession>Q8BWI7</accession>
<organism>
    <name type="scientific">Mus musculus</name>
    <name type="common">Mouse</name>
    <dbReference type="NCBI Taxonomy" id="10090"/>
    <lineage>
        <taxon>Eukaryota</taxon>
        <taxon>Metazoa</taxon>
        <taxon>Chordata</taxon>
        <taxon>Craniata</taxon>
        <taxon>Vertebrata</taxon>
        <taxon>Euteleostomi</taxon>
        <taxon>Mammalia</taxon>
        <taxon>Eutheria</taxon>
        <taxon>Euarchontoglires</taxon>
        <taxon>Glires</taxon>
        <taxon>Rodentia</taxon>
        <taxon>Myomorpha</taxon>
        <taxon>Muroidea</taxon>
        <taxon>Muridae</taxon>
        <taxon>Murinae</taxon>
        <taxon>Mus</taxon>
        <taxon>Mus</taxon>
    </lineage>
</organism>
<feature type="chain" id="PRO_0000086083" description="Calcium/calmodulin-dependent protein kinase type 1D">
    <location>
        <begin position="1"/>
        <end position="385"/>
    </location>
</feature>
<feature type="domain" description="Protein kinase" evidence="3">
    <location>
        <begin position="23"/>
        <end position="279"/>
    </location>
</feature>
<feature type="region of interest" description="Autoinhibitory domain" evidence="1">
    <location>
        <begin position="279"/>
        <end position="319"/>
    </location>
</feature>
<feature type="region of interest" description="Calmodulin-binding" evidence="1">
    <location>
        <begin position="299"/>
        <end position="320"/>
    </location>
</feature>
<feature type="region of interest" description="Disordered" evidence="5">
    <location>
        <begin position="363"/>
        <end position="385"/>
    </location>
</feature>
<feature type="short sequence motif" description="Nuclear export signal" evidence="1">
    <location>
        <begin position="318"/>
        <end position="324"/>
    </location>
</feature>
<feature type="compositionally biased region" description="Polar residues" evidence="5">
    <location>
        <begin position="375"/>
        <end position="385"/>
    </location>
</feature>
<feature type="active site" description="Proton acceptor" evidence="3 4">
    <location>
        <position position="144"/>
    </location>
</feature>
<feature type="binding site" evidence="3">
    <location>
        <begin position="29"/>
        <end position="37"/>
    </location>
    <ligand>
        <name>ATP</name>
        <dbReference type="ChEBI" id="CHEBI:30616"/>
    </ligand>
</feature>
<feature type="binding site" evidence="3">
    <location>
        <position position="52"/>
    </location>
    <ligand>
        <name>ATP</name>
        <dbReference type="ChEBI" id="CHEBI:30616"/>
    </ligand>
</feature>
<feature type="modified residue" description="Phosphoserine" evidence="2">
    <location>
        <position position="122"/>
    </location>
</feature>
<feature type="modified residue" description="Phosphothreonine; by CaMKK1 and CaMKK2" evidence="2">
    <location>
        <position position="180"/>
    </location>
</feature>
<feature type="cross-link" description="Glycyl lysine isopeptide (Lys-Gly) (interchain with G-Cter in SUMO2)" evidence="2">
    <location>
        <position position="113"/>
    </location>
</feature>
<feature type="splice variant" id="VSP_012136" description="In isoform 3." evidence="9">
    <original>MARENGESSSSWKKQAEDIKKIFEFKETLGT</original>
    <variation>MAEFVSWSCLNFRWSWIKGSRNS</variation>
    <location>
        <begin position="1"/>
        <end position="31"/>
    </location>
</feature>
<feature type="splice variant" id="VSP_012137" description="In isoform 2." evidence="10">
    <original>ASVSSNLSLASQKDCLAPSTLCSFLSSSSGVAGVGAERRPRPTTVTTGHTGSK</original>
    <variation>VWHLPRSVVSFLLRRGSQESELRGDPQPPL</variation>
    <location>
        <begin position="333"/>
        <end position="385"/>
    </location>
</feature>
<feature type="mutagenesis site" description="Catalytically inactive form.">
    <original>K</original>
    <variation>D</variation>
    <location>
        <position position="52"/>
    </location>
</feature>
<feature type="mutagenesis site" description="Constitutively active form; when associated with A-301." evidence="8">
    <original>IHES</original>
    <variation>DEDD</variation>
    <location>
        <begin position="289"/>
        <end position="292"/>
    </location>
</feature>
<feature type="mutagenesis site" description="Constitutively active form; when associated with 289-A--A-292." evidence="8">
    <original>F</original>
    <variation>A</variation>
    <location>
        <position position="301"/>
    </location>
</feature>
<feature type="sequence conflict" description="In Ref. 3; BAC35295." evidence="11" ref="3">
    <original>G</original>
    <variation>Q</variation>
    <location>
        <position position="30"/>
    </location>
</feature>
<feature type="sequence conflict" description="In Ref. 3; BAC35295." evidence="11" ref="3">
    <original>S</original>
    <variation>N</variation>
    <location>
        <position position="327"/>
    </location>
</feature>
<name>KCC1D_MOUSE</name>
<proteinExistence type="evidence at protein level"/>
<keyword id="KW-0021">Allosteric enzyme</keyword>
<keyword id="KW-0025">Alternative splicing</keyword>
<keyword id="KW-0067">ATP-binding</keyword>
<keyword id="KW-0106">Calcium</keyword>
<keyword id="KW-0112">Calmodulin-binding</keyword>
<keyword id="KW-0963">Cytoplasm</keyword>
<keyword id="KW-0395">Inflammatory response</keyword>
<keyword id="KW-1017">Isopeptide bond</keyword>
<keyword id="KW-0418">Kinase</keyword>
<keyword id="KW-0524">Neurogenesis</keyword>
<keyword id="KW-0547">Nucleotide-binding</keyword>
<keyword id="KW-0539">Nucleus</keyword>
<keyword id="KW-0597">Phosphoprotein</keyword>
<keyword id="KW-1185">Reference proteome</keyword>
<keyword id="KW-0723">Serine/threonine-protein kinase</keyword>
<keyword id="KW-0808">Transferase</keyword>
<keyword id="KW-0832">Ubl conjugation</keyword>
<sequence length="385" mass="42919">MARENGESSSSWKKQAEDIKKIFEFKETLGTGAFSEVVLAEEKATGKLFAVKCIPKKALKGKESSIENEIAVLRKIKHENIVALEDIYESPNHLYLVMQLVSGGELFDRIVEKGFYTEKDASTLIRQVLDAVYYLHRMGIVHRDLKPENLLYYSQDEESKIMISDFGLSKMEGKGDVMSTACGTPGYVAPEVLAQKPYSKAVDCWSIGVIAYILLCGYPPFYDENDSKLFEQILKAEYEFDSPYWDDISDSAKDFIRNLMEKDPNKRYTCEQAARHPWIAGDTALSKNIHESVSAQIRKNFAKSKWRQAFNATAVVRHMRRLQLGSSLDSSNASVSSNLSLASQKDCLAPSTLCSFLSSSSGVAGVGAERRPRPTTVTTGHTGSK</sequence>
<reference key="1">
    <citation type="journal article" date="2004" name="Exp. Cell Res.">
        <title>Effects of PU.1-induced mouse calcium-calmodulin-dependent kinase I-like kinase (CKLiK) on apoptosis of murine erythroleukemia cells.</title>
        <authorList>
            <person name="Yamada T."/>
            <person name="Suzuki M."/>
            <person name="Satoh H."/>
            <person name="Kihara-Negishi F."/>
            <person name="Nakano H."/>
            <person name="Oikawa T."/>
        </authorList>
    </citation>
    <scope>NUCLEOTIDE SEQUENCE [MRNA] (ISOFORMS 1 AND 2)</scope>
    <scope>FUNCTION</scope>
    <scope>TISSUE SPECIFICITY</scope>
</reference>
<reference key="2">
    <citation type="journal article" date="2003" name="J. Lipid Res.">
        <title>Novel putative SREBP and LXR target genes identified by microarray analysis in liver of cholesterol-fed mice.</title>
        <authorList>
            <person name="Maxwell K.N."/>
            <person name="Soccio R.E."/>
            <person name="Duncan E.M."/>
            <person name="Sehayek E."/>
            <person name="Breslow J.L."/>
        </authorList>
    </citation>
    <scope>NUCLEOTIDE SEQUENCE [MRNA] (ISOFORM 3)</scope>
    <scope>INDUCTION</scope>
    <source>
        <strain>C57BL/6J</strain>
        <tissue>Liver</tissue>
    </source>
</reference>
<reference key="3">
    <citation type="journal article" date="2005" name="Science">
        <title>The transcriptional landscape of the mammalian genome.</title>
        <authorList>
            <person name="Carninci P."/>
            <person name="Kasukawa T."/>
            <person name="Katayama S."/>
            <person name="Gough J."/>
            <person name="Frith M.C."/>
            <person name="Maeda N."/>
            <person name="Oyama R."/>
            <person name="Ravasi T."/>
            <person name="Lenhard B."/>
            <person name="Wells C."/>
            <person name="Kodzius R."/>
            <person name="Shimokawa K."/>
            <person name="Bajic V.B."/>
            <person name="Brenner S.E."/>
            <person name="Batalov S."/>
            <person name="Forrest A.R."/>
            <person name="Zavolan M."/>
            <person name="Davis M.J."/>
            <person name="Wilming L.G."/>
            <person name="Aidinis V."/>
            <person name="Allen J.E."/>
            <person name="Ambesi-Impiombato A."/>
            <person name="Apweiler R."/>
            <person name="Aturaliya R.N."/>
            <person name="Bailey T.L."/>
            <person name="Bansal M."/>
            <person name="Baxter L."/>
            <person name="Beisel K.W."/>
            <person name="Bersano T."/>
            <person name="Bono H."/>
            <person name="Chalk A.M."/>
            <person name="Chiu K.P."/>
            <person name="Choudhary V."/>
            <person name="Christoffels A."/>
            <person name="Clutterbuck D.R."/>
            <person name="Crowe M.L."/>
            <person name="Dalla E."/>
            <person name="Dalrymple B.P."/>
            <person name="de Bono B."/>
            <person name="Della Gatta G."/>
            <person name="di Bernardo D."/>
            <person name="Down T."/>
            <person name="Engstrom P."/>
            <person name="Fagiolini M."/>
            <person name="Faulkner G."/>
            <person name="Fletcher C.F."/>
            <person name="Fukushima T."/>
            <person name="Furuno M."/>
            <person name="Futaki S."/>
            <person name="Gariboldi M."/>
            <person name="Georgii-Hemming P."/>
            <person name="Gingeras T.R."/>
            <person name="Gojobori T."/>
            <person name="Green R.E."/>
            <person name="Gustincich S."/>
            <person name="Harbers M."/>
            <person name="Hayashi Y."/>
            <person name="Hensch T.K."/>
            <person name="Hirokawa N."/>
            <person name="Hill D."/>
            <person name="Huminiecki L."/>
            <person name="Iacono M."/>
            <person name="Ikeo K."/>
            <person name="Iwama A."/>
            <person name="Ishikawa T."/>
            <person name="Jakt M."/>
            <person name="Kanapin A."/>
            <person name="Katoh M."/>
            <person name="Kawasawa Y."/>
            <person name="Kelso J."/>
            <person name="Kitamura H."/>
            <person name="Kitano H."/>
            <person name="Kollias G."/>
            <person name="Krishnan S.P."/>
            <person name="Kruger A."/>
            <person name="Kummerfeld S.K."/>
            <person name="Kurochkin I.V."/>
            <person name="Lareau L.F."/>
            <person name="Lazarevic D."/>
            <person name="Lipovich L."/>
            <person name="Liu J."/>
            <person name="Liuni S."/>
            <person name="McWilliam S."/>
            <person name="Madan Babu M."/>
            <person name="Madera M."/>
            <person name="Marchionni L."/>
            <person name="Matsuda H."/>
            <person name="Matsuzawa S."/>
            <person name="Miki H."/>
            <person name="Mignone F."/>
            <person name="Miyake S."/>
            <person name="Morris K."/>
            <person name="Mottagui-Tabar S."/>
            <person name="Mulder N."/>
            <person name="Nakano N."/>
            <person name="Nakauchi H."/>
            <person name="Ng P."/>
            <person name="Nilsson R."/>
            <person name="Nishiguchi S."/>
            <person name="Nishikawa S."/>
            <person name="Nori F."/>
            <person name="Ohara O."/>
            <person name="Okazaki Y."/>
            <person name="Orlando V."/>
            <person name="Pang K.C."/>
            <person name="Pavan W.J."/>
            <person name="Pavesi G."/>
            <person name="Pesole G."/>
            <person name="Petrovsky N."/>
            <person name="Piazza S."/>
            <person name="Reed J."/>
            <person name="Reid J.F."/>
            <person name="Ring B.Z."/>
            <person name="Ringwald M."/>
            <person name="Rost B."/>
            <person name="Ruan Y."/>
            <person name="Salzberg S.L."/>
            <person name="Sandelin A."/>
            <person name="Schneider C."/>
            <person name="Schoenbach C."/>
            <person name="Sekiguchi K."/>
            <person name="Semple C.A."/>
            <person name="Seno S."/>
            <person name="Sessa L."/>
            <person name="Sheng Y."/>
            <person name="Shibata Y."/>
            <person name="Shimada H."/>
            <person name="Shimada K."/>
            <person name="Silva D."/>
            <person name="Sinclair B."/>
            <person name="Sperling S."/>
            <person name="Stupka E."/>
            <person name="Sugiura K."/>
            <person name="Sultana R."/>
            <person name="Takenaka Y."/>
            <person name="Taki K."/>
            <person name="Tammoja K."/>
            <person name="Tan S.L."/>
            <person name="Tang S."/>
            <person name="Taylor M.S."/>
            <person name="Tegner J."/>
            <person name="Teichmann S.A."/>
            <person name="Ueda H.R."/>
            <person name="van Nimwegen E."/>
            <person name="Verardo R."/>
            <person name="Wei C.L."/>
            <person name="Yagi K."/>
            <person name="Yamanishi H."/>
            <person name="Zabarovsky E."/>
            <person name="Zhu S."/>
            <person name="Zimmer A."/>
            <person name="Hide W."/>
            <person name="Bult C."/>
            <person name="Grimmond S.M."/>
            <person name="Teasdale R.D."/>
            <person name="Liu E.T."/>
            <person name="Brusic V."/>
            <person name="Quackenbush J."/>
            <person name="Wahlestedt C."/>
            <person name="Mattick J.S."/>
            <person name="Hume D.A."/>
            <person name="Kai C."/>
            <person name="Sasaki D."/>
            <person name="Tomaru Y."/>
            <person name="Fukuda S."/>
            <person name="Kanamori-Katayama M."/>
            <person name="Suzuki M."/>
            <person name="Aoki J."/>
            <person name="Arakawa T."/>
            <person name="Iida J."/>
            <person name="Imamura K."/>
            <person name="Itoh M."/>
            <person name="Kato T."/>
            <person name="Kawaji H."/>
            <person name="Kawagashira N."/>
            <person name="Kawashima T."/>
            <person name="Kojima M."/>
            <person name="Kondo S."/>
            <person name="Konno H."/>
            <person name="Nakano K."/>
            <person name="Ninomiya N."/>
            <person name="Nishio T."/>
            <person name="Okada M."/>
            <person name="Plessy C."/>
            <person name="Shibata K."/>
            <person name="Shiraki T."/>
            <person name="Suzuki S."/>
            <person name="Tagami M."/>
            <person name="Waki K."/>
            <person name="Watahiki A."/>
            <person name="Okamura-Oho Y."/>
            <person name="Suzuki H."/>
            <person name="Kawai J."/>
            <person name="Hayashizaki Y."/>
        </authorList>
    </citation>
    <scope>NUCLEOTIDE SEQUENCE [LARGE SCALE MRNA] (ISOFORM 1)</scope>
    <source>
        <strain>C57BL/6J</strain>
        <strain>NOD</strain>
        <tissue>Brain</tissue>
        <tissue>Lung</tissue>
    </source>
</reference>
<reference key="4">
    <citation type="journal article" date="2008" name="Exp. Hematol.">
        <title>A cascade of Ca(2+)/calmodulin-dependent protein kinases regulates the differentiation and functional activation of murine neutrophils.</title>
        <authorList>
            <person name="Gaines P."/>
            <person name="Lamoureux J."/>
            <person name="Marisetty A."/>
            <person name="Chi J."/>
            <person name="Berliner N."/>
        </authorList>
    </citation>
    <scope>FUNCTION</scope>
    <scope>DEVELOPMENTAL STAGE</scope>
    <scope>MUTAGENESIS OF 289-ILE--SER-292 AND PHE-301</scope>
</reference>
<reference key="5">
    <citation type="journal article" date="2010" name="Cell">
        <title>A tissue-specific atlas of mouse protein phosphorylation and expression.</title>
        <authorList>
            <person name="Huttlin E.L."/>
            <person name="Jedrychowski M.P."/>
            <person name="Elias J.E."/>
            <person name="Goswami T."/>
            <person name="Rad R."/>
            <person name="Beausoleil S.A."/>
            <person name="Villen J."/>
            <person name="Haas W."/>
            <person name="Sowa M.E."/>
            <person name="Gygi S.P."/>
        </authorList>
    </citation>
    <scope>IDENTIFICATION BY MASS SPECTROMETRY [LARGE SCALE ANALYSIS]</scope>
    <source>
        <tissue>Brain</tissue>
        <tissue>Pancreas</tissue>
        <tissue>Spleen</tissue>
    </source>
</reference>
<evidence type="ECO:0000250" key="1"/>
<evidence type="ECO:0000250" key="2">
    <source>
        <dbReference type="UniProtKB" id="Q8IU85"/>
    </source>
</evidence>
<evidence type="ECO:0000255" key="3">
    <source>
        <dbReference type="PROSITE-ProRule" id="PRU00159"/>
    </source>
</evidence>
<evidence type="ECO:0000255" key="4">
    <source>
        <dbReference type="PROSITE-ProRule" id="PRU10027"/>
    </source>
</evidence>
<evidence type="ECO:0000256" key="5">
    <source>
        <dbReference type="SAM" id="MobiDB-lite"/>
    </source>
</evidence>
<evidence type="ECO:0000269" key="6">
    <source>
    </source>
</evidence>
<evidence type="ECO:0000269" key="7">
    <source>
    </source>
</evidence>
<evidence type="ECO:0000269" key="8">
    <source>
    </source>
</evidence>
<evidence type="ECO:0000303" key="9">
    <source>
    </source>
</evidence>
<evidence type="ECO:0000303" key="10">
    <source>
    </source>
</evidence>
<evidence type="ECO:0000305" key="11"/>